<keyword id="KW-0217">Developmental protein</keyword>
<keyword id="KW-0221">Differentiation</keyword>
<keyword id="KW-0524">Neurogenesis</keyword>
<keyword id="KW-1185">Reference proteome</keyword>
<evidence type="ECO:0000255" key="1">
    <source>
        <dbReference type="PROSITE-ProRule" id="PRU00981"/>
    </source>
</evidence>
<evidence type="ECO:0000256" key="2">
    <source>
        <dbReference type="SAM" id="MobiDB-lite"/>
    </source>
</evidence>
<evidence type="ECO:0000269" key="3">
    <source>
    </source>
</evidence>
<evidence type="ECO:0000269" key="4">
    <source>
    </source>
</evidence>
<evidence type="ECO:0000269" key="5">
    <source>
    </source>
</evidence>
<evidence type="ECO:0000269" key="6">
    <source>
    </source>
</evidence>
<evidence type="ECO:0000305" key="7"/>
<feature type="chain" id="PRO_0000127136" description="Achaete-scute complex protein T4">
    <location>
        <begin position="1"/>
        <end position="345"/>
    </location>
</feature>
<feature type="domain" description="bHLH" evidence="1">
    <location>
        <begin position="99"/>
        <end position="162"/>
    </location>
</feature>
<feature type="region of interest" description="Disordered" evidence="2">
    <location>
        <begin position="78"/>
        <end position="109"/>
    </location>
</feature>
<feature type="compositionally biased region" description="Low complexity" evidence="2">
    <location>
        <begin position="78"/>
        <end position="92"/>
    </location>
</feature>
<feature type="sequence conflict" description="In Ref. 1; AAA28313." evidence="7" ref="1">
    <original>R</original>
    <variation>S</variation>
    <location>
        <position position="161"/>
    </location>
</feature>
<feature type="sequence conflict" description="In Ref. 1; AAA28313." evidence="7" ref="1">
    <original>T</original>
    <variation>R</variation>
    <location>
        <position position="213"/>
    </location>
</feature>
<feature type="sequence conflict" description="In Ref. 1; AAA28313." evidence="7" ref="1">
    <original>L</original>
    <variation>V</variation>
    <location>
        <position position="219"/>
    </location>
</feature>
<name>AST4_DROME</name>
<gene>
    <name type="primary">sc</name>
    <name type="synonym">sis-b</name>
    <name type="synonym">T4</name>
    <name type="ORF">CG3827</name>
</gene>
<proteinExistence type="evidence at protein level"/>
<sequence length="345" mass="38155">MKNNNNTTKSTTMSSSVLSTNETFPTTINSATKIFRYQHIMPAPSPLIPGGNQNQPAGTMPIKTRKYTPRGMALTRCSESVSSLSPGSSPAPYNVDQSQSVQRRNARERNRVKQVNNSFARLRQHIPQSIITDLTKGGGRGPHKKISKVDTLRIAVEYIRRLQDLVDDLNGGSNIGANNAVTQLQLCLDESSSHSSSSSTCSSSGHNTYYQNTISVSPLQQQQQLQRQQFNHQPLTALSLNTNLVGTSVPGGDAGCVSTSKNQQTCHSPTSSFNSSMSFDSGTYEGVPQQISTHLDRLDHLDNELHTHSQLQLKFEPYEHFQLDEEDCTPDDEEILDYISLWQEQ</sequence>
<reference key="1">
    <citation type="journal article" date="1987" name="Cell">
        <title>The achaete-scute gene complex of D. melanogaster: conserved domains in a subset of genes required for neurogenesis and their homology to myc.</title>
        <authorList>
            <person name="Villares R."/>
            <person name="Cabrera C.V."/>
        </authorList>
    </citation>
    <scope>NUCLEOTIDE SEQUENCE [GENOMIC DNA]</scope>
    <source>
        <strain>Canton-S</strain>
    </source>
</reference>
<reference key="2">
    <citation type="submission" date="1988-09" db="EMBL/GenBank/DDBJ databases">
        <authorList>
            <person name="Villares R."/>
        </authorList>
    </citation>
    <scope>SEQUENCE REVISION</scope>
</reference>
<reference key="3">
    <citation type="journal article" date="2000" name="Science">
        <title>The genome sequence of Drosophila melanogaster.</title>
        <authorList>
            <person name="Adams M.D."/>
            <person name="Celniker S.E."/>
            <person name="Holt R.A."/>
            <person name="Evans C.A."/>
            <person name="Gocayne J.D."/>
            <person name="Amanatides P.G."/>
            <person name="Scherer S.E."/>
            <person name="Li P.W."/>
            <person name="Hoskins R.A."/>
            <person name="Galle R.F."/>
            <person name="George R.A."/>
            <person name="Lewis S.E."/>
            <person name="Richards S."/>
            <person name="Ashburner M."/>
            <person name="Henderson S.N."/>
            <person name="Sutton G.G."/>
            <person name="Wortman J.R."/>
            <person name="Yandell M.D."/>
            <person name="Zhang Q."/>
            <person name="Chen L.X."/>
            <person name="Brandon R.C."/>
            <person name="Rogers Y.-H.C."/>
            <person name="Blazej R.G."/>
            <person name="Champe M."/>
            <person name="Pfeiffer B.D."/>
            <person name="Wan K.H."/>
            <person name="Doyle C."/>
            <person name="Baxter E.G."/>
            <person name="Helt G."/>
            <person name="Nelson C.R."/>
            <person name="Miklos G.L.G."/>
            <person name="Abril J.F."/>
            <person name="Agbayani A."/>
            <person name="An H.-J."/>
            <person name="Andrews-Pfannkoch C."/>
            <person name="Baldwin D."/>
            <person name="Ballew R.M."/>
            <person name="Basu A."/>
            <person name="Baxendale J."/>
            <person name="Bayraktaroglu L."/>
            <person name="Beasley E.M."/>
            <person name="Beeson K.Y."/>
            <person name="Benos P.V."/>
            <person name="Berman B.P."/>
            <person name="Bhandari D."/>
            <person name="Bolshakov S."/>
            <person name="Borkova D."/>
            <person name="Botchan M.R."/>
            <person name="Bouck J."/>
            <person name="Brokstein P."/>
            <person name="Brottier P."/>
            <person name="Burtis K.C."/>
            <person name="Busam D.A."/>
            <person name="Butler H."/>
            <person name="Cadieu E."/>
            <person name="Center A."/>
            <person name="Chandra I."/>
            <person name="Cherry J.M."/>
            <person name="Cawley S."/>
            <person name="Dahlke C."/>
            <person name="Davenport L.B."/>
            <person name="Davies P."/>
            <person name="de Pablos B."/>
            <person name="Delcher A."/>
            <person name="Deng Z."/>
            <person name="Mays A.D."/>
            <person name="Dew I."/>
            <person name="Dietz S.M."/>
            <person name="Dodson K."/>
            <person name="Doup L.E."/>
            <person name="Downes M."/>
            <person name="Dugan-Rocha S."/>
            <person name="Dunkov B.C."/>
            <person name="Dunn P."/>
            <person name="Durbin K.J."/>
            <person name="Evangelista C.C."/>
            <person name="Ferraz C."/>
            <person name="Ferriera S."/>
            <person name="Fleischmann W."/>
            <person name="Fosler C."/>
            <person name="Gabrielian A.E."/>
            <person name="Garg N.S."/>
            <person name="Gelbart W.M."/>
            <person name="Glasser K."/>
            <person name="Glodek A."/>
            <person name="Gong F."/>
            <person name="Gorrell J.H."/>
            <person name="Gu Z."/>
            <person name="Guan P."/>
            <person name="Harris M."/>
            <person name="Harris N.L."/>
            <person name="Harvey D.A."/>
            <person name="Heiman T.J."/>
            <person name="Hernandez J.R."/>
            <person name="Houck J."/>
            <person name="Hostin D."/>
            <person name="Houston K.A."/>
            <person name="Howland T.J."/>
            <person name="Wei M.-H."/>
            <person name="Ibegwam C."/>
            <person name="Jalali M."/>
            <person name="Kalush F."/>
            <person name="Karpen G.H."/>
            <person name="Ke Z."/>
            <person name="Kennison J.A."/>
            <person name="Ketchum K.A."/>
            <person name="Kimmel B.E."/>
            <person name="Kodira C.D."/>
            <person name="Kraft C.L."/>
            <person name="Kravitz S."/>
            <person name="Kulp D."/>
            <person name="Lai Z."/>
            <person name="Lasko P."/>
            <person name="Lei Y."/>
            <person name="Levitsky A.A."/>
            <person name="Li J.H."/>
            <person name="Li Z."/>
            <person name="Liang Y."/>
            <person name="Lin X."/>
            <person name="Liu X."/>
            <person name="Mattei B."/>
            <person name="McIntosh T.C."/>
            <person name="McLeod M.P."/>
            <person name="McPherson D."/>
            <person name="Merkulov G."/>
            <person name="Milshina N.V."/>
            <person name="Mobarry C."/>
            <person name="Morris J."/>
            <person name="Moshrefi A."/>
            <person name="Mount S.M."/>
            <person name="Moy M."/>
            <person name="Murphy B."/>
            <person name="Murphy L."/>
            <person name="Muzny D.M."/>
            <person name="Nelson D.L."/>
            <person name="Nelson D.R."/>
            <person name="Nelson K.A."/>
            <person name="Nixon K."/>
            <person name="Nusskern D.R."/>
            <person name="Pacleb J.M."/>
            <person name="Palazzolo M."/>
            <person name="Pittman G.S."/>
            <person name="Pan S."/>
            <person name="Pollard J."/>
            <person name="Puri V."/>
            <person name="Reese M.G."/>
            <person name="Reinert K."/>
            <person name="Remington K."/>
            <person name="Saunders R.D.C."/>
            <person name="Scheeler F."/>
            <person name="Shen H."/>
            <person name="Shue B.C."/>
            <person name="Siden-Kiamos I."/>
            <person name="Simpson M."/>
            <person name="Skupski M.P."/>
            <person name="Smith T.J."/>
            <person name="Spier E."/>
            <person name="Spradling A.C."/>
            <person name="Stapleton M."/>
            <person name="Strong R."/>
            <person name="Sun E."/>
            <person name="Svirskas R."/>
            <person name="Tector C."/>
            <person name="Turner R."/>
            <person name="Venter E."/>
            <person name="Wang A.H."/>
            <person name="Wang X."/>
            <person name="Wang Z.-Y."/>
            <person name="Wassarman D.A."/>
            <person name="Weinstock G.M."/>
            <person name="Weissenbach J."/>
            <person name="Williams S.M."/>
            <person name="Woodage T."/>
            <person name="Worley K.C."/>
            <person name="Wu D."/>
            <person name="Yang S."/>
            <person name="Yao Q.A."/>
            <person name="Ye J."/>
            <person name="Yeh R.-F."/>
            <person name="Zaveri J.S."/>
            <person name="Zhan M."/>
            <person name="Zhang G."/>
            <person name="Zhao Q."/>
            <person name="Zheng L."/>
            <person name="Zheng X.H."/>
            <person name="Zhong F.N."/>
            <person name="Zhong W."/>
            <person name="Zhou X."/>
            <person name="Zhu S.C."/>
            <person name="Zhu X."/>
            <person name="Smith H.O."/>
            <person name="Gibbs R.A."/>
            <person name="Myers E.W."/>
            <person name="Rubin G.M."/>
            <person name="Venter J.C."/>
        </authorList>
    </citation>
    <scope>NUCLEOTIDE SEQUENCE [LARGE SCALE GENOMIC DNA]</scope>
    <source>
        <strain>Berkeley</strain>
    </source>
</reference>
<reference key="4">
    <citation type="journal article" date="2002" name="Genome Biol.">
        <title>Annotation of the Drosophila melanogaster euchromatic genome: a systematic review.</title>
        <authorList>
            <person name="Misra S."/>
            <person name="Crosby M.A."/>
            <person name="Mungall C.J."/>
            <person name="Matthews B.B."/>
            <person name="Campbell K.S."/>
            <person name="Hradecky P."/>
            <person name="Huang Y."/>
            <person name="Kaminker J.S."/>
            <person name="Millburn G.H."/>
            <person name="Prochnik S.E."/>
            <person name="Smith C.D."/>
            <person name="Tupy J.L."/>
            <person name="Whitfield E.J."/>
            <person name="Bayraktaroglu L."/>
            <person name="Berman B.P."/>
            <person name="Bettencourt B.R."/>
            <person name="Celniker S.E."/>
            <person name="de Grey A.D.N.J."/>
            <person name="Drysdale R.A."/>
            <person name="Harris N.L."/>
            <person name="Richter J."/>
            <person name="Russo S."/>
            <person name="Schroeder A.J."/>
            <person name="Shu S.Q."/>
            <person name="Stapleton M."/>
            <person name="Yamada C."/>
            <person name="Ashburner M."/>
            <person name="Gelbart W.M."/>
            <person name="Rubin G.M."/>
            <person name="Lewis S.E."/>
        </authorList>
    </citation>
    <scope>GENOME REANNOTATION</scope>
    <source>
        <strain>Berkeley</strain>
    </source>
</reference>
<reference key="5">
    <citation type="journal article" date="2000" name="Science">
        <title>From sequence to chromosome: the tip of the X chromosome of D. melanogaster.</title>
        <authorList>
            <person name="Benos P.V."/>
            <person name="Gatt M.K."/>
            <person name="Ashburner M."/>
            <person name="Murphy L."/>
            <person name="Harris D."/>
            <person name="Barrell B.G."/>
            <person name="Ferraz C."/>
            <person name="Vidal S."/>
            <person name="Brun C."/>
            <person name="Demailles J."/>
            <person name="Cadieu E."/>
            <person name="Dreano S."/>
            <person name="Gloux S."/>
            <person name="Lelaure V."/>
            <person name="Mottier S."/>
            <person name="Galibert F."/>
            <person name="Borkova D."/>
            <person name="Minana B."/>
            <person name="Kafatos F.C."/>
            <person name="Louis C."/>
            <person name="Siden-Kiamos I."/>
            <person name="Bolshakov S."/>
            <person name="Papagiannakis G."/>
            <person name="Spanos L."/>
            <person name="Cox S."/>
            <person name="Madueno E."/>
            <person name="de Pablos B."/>
            <person name="Modolell J."/>
            <person name="Peter A."/>
            <person name="Schoettler P."/>
            <person name="Werner M."/>
            <person name="Mourkioti F."/>
            <person name="Beinert N."/>
            <person name="Dowe G."/>
            <person name="Schaefer U."/>
            <person name="Jaeckle H."/>
            <person name="Bucheton A."/>
            <person name="Callister D.M."/>
            <person name="Campbell L.A."/>
            <person name="Darlamitsou A."/>
            <person name="Henderson N.S."/>
            <person name="McMillan P.J."/>
            <person name="Salles C."/>
            <person name="Tait E.A."/>
            <person name="Valenti P."/>
            <person name="Saunders R.D.C."/>
            <person name="Glover D.M."/>
        </authorList>
    </citation>
    <scope>NUCLEOTIDE SEQUENCE [LARGE SCALE GENOMIC DNA]</scope>
    <source>
        <strain>Oregon-R</strain>
    </source>
</reference>
<reference key="6">
    <citation type="submission" date="2005-08" db="EMBL/GenBank/DDBJ databases">
        <authorList>
            <person name="Stapleton M."/>
            <person name="Carlson J.W."/>
            <person name="Chavez C."/>
            <person name="Frise E."/>
            <person name="George R.A."/>
            <person name="Pacleb J.W."/>
            <person name="Park S."/>
            <person name="Wan K.H."/>
            <person name="Yu C."/>
            <person name="Celniker S.E."/>
        </authorList>
    </citation>
    <scope>NUCLEOTIDE SEQUENCE [LARGE SCALE MRNA]</scope>
    <source>
        <strain>Berkeley</strain>
    </source>
</reference>
<reference key="7">
    <citation type="journal article" date="1989" name="EMBO J.">
        <title>The scute (T4) gene acts as a numerator element of the X: a signal that determines the state of activity of sex-lethal in Drosophila.</title>
        <authorList>
            <person name="Torres M."/>
            <person name="Sanchez L."/>
        </authorList>
    </citation>
    <scope>FUNCTION</scope>
</reference>
<reference key="8">
    <citation type="journal article" date="1993" name="Genes Dev.">
        <title>A bZIP protein, sisterless-a, collaborates with bHLH transcription factors early in Drosophila development to determine sex.</title>
        <authorList>
            <person name="Erickson J.W."/>
            <person name="Cline T.W."/>
        </authorList>
    </citation>
    <scope>FUNCTION</scope>
    <scope>TISSUE SPECIFICITY</scope>
    <scope>DEVELOPMENTAL STAGE</scope>
    <source>
        <strain>Oregon-R</strain>
    </source>
</reference>
<reference key="9">
    <citation type="journal article" date="1995" name="Mol. Gen. Genet.">
        <title>Protein-protein interactions among components of the Drosophila primary sex determination signal.</title>
        <authorList>
            <person name="Liu Y."/>
            <person name="Belote J.M."/>
        </authorList>
    </citation>
    <scope>INTERACTION WITH DA</scope>
</reference>
<reference key="10">
    <citation type="journal article" date="2005" name="J. Mol. Biol.">
        <title>Drosophila BAP60 is an essential component of the Brahma complex, required for gene activation and repression.</title>
        <authorList>
            <person name="Moller A."/>
            <person name="Avila F.W."/>
            <person name="Erickson J.W."/>
            <person name="Jackle H."/>
        </authorList>
    </citation>
    <scope>INTERACTION WITH BAP60</scope>
</reference>
<accession>P10084</accession>
<accession>O76890</accession>
<accession>Q4V705</accession>
<dbReference type="EMBL" id="M17119">
    <property type="protein sequence ID" value="AAA28313.1"/>
    <property type="molecule type" value="Genomic_DNA"/>
</dbReference>
<dbReference type="EMBL" id="AE014298">
    <property type="protein sequence ID" value="AAF45499.1"/>
    <property type="molecule type" value="Genomic_DNA"/>
</dbReference>
<dbReference type="EMBL" id="AL024453">
    <property type="protein sequence ID" value="CAA19657.1"/>
    <property type="molecule type" value="Genomic_DNA"/>
</dbReference>
<dbReference type="EMBL" id="BT022151">
    <property type="protein sequence ID" value="AAY51546.1"/>
    <property type="molecule type" value="mRNA"/>
</dbReference>
<dbReference type="PIR" id="B43731">
    <property type="entry name" value="B43731"/>
</dbReference>
<dbReference type="RefSeq" id="NP_476803.1">
    <property type="nucleotide sequence ID" value="NM_057455.3"/>
</dbReference>
<dbReference type="SMR" id="P10084"/>
<dbReference type="BioGRID" id="57555">
    <property type="interactions" value="46"/>
</dbReference>
<dbReference type="DIP" id="DIP-325N"/>
<dbReference type="FunCoup" id="P10084">
    <property type="interactions" value="10"/>
</dbReference>
<dbReference type="IntAct" id="P10084">
    <property type="interactions" value="8"/>
</dbReference>
<dbReference type="STRING" id="7227.FBpp0070072"/>
<dbReference type="PaxDb" id="7227-FBpp0070072"/>
<dbReference type="DNASU" id="30982"/>
<dbReference type="EnsemblMetazoa" id="FBtr0070073">
    <property type="protein sequence ID" value="FBpp0070072"/>
    <property type="gene ID" value="FBgn0004170"/>
</dbReference>
<dbReference type="GeneID" id="30982"/>
<dbReference type="KEGG" id="dme:Dmel_CG3827"/>
<dbReference type="AGR" id="FB:FBgn0004170"/>
<dbReference type="CTD" id="20237"/>
<dbReference type="FlyBase" id="FBgn0004170">
    <property type="gene designation" value="sc"/>
</dbReference>
<dbReference type="VEuPathDB" id="VectorBase:FBgn0004170"/>
<dbReference type="eggNOG" id="KOG4029">
    <property type="taxonomic scope" value="Eukaryota"/>
</dbReference>
<dbReference type="GeneTree" id="ENSGT00940000170891"/>
<dbReference type="HOGENOM" id="CLU_853281_0_0_1"/>
<dbReference type="InParanoid" id="P10084"/>
<dbReference type="OMA" id="QRQQFPH"/>
<dbReference type="OrthoDB" id="5976910at2759"/>
<dbReference type="PhylomeDB" id="P10084"/>
<dbReference type="SignaLink" id="P10084"/>
<dbReference type="BioGRID-ORCS" id="30982">
    <property type="hits" value="0 hits in 3 CRISPR screens"/>
</dbReference>
<dbReference type="GenomeRNAi" id="30982"/>
<dbReference type="PRO" id="PR:P10084"/>
<dbReference type="Proteomes" id="UP000000803">
    <property type="component" value="Chromosome X"/>
</dbReference>
<dbReference type="Bgee" id="FBgn0004170">
    <property type="expression patterns" value="Expressed in imaginal disc and 25 other cell types or tissues"/>
</dbReference>
<dbReference type="GO" id="GO:0090575">
    <property type="term" value="C:RNA polymerase II transcription regulator complex"/>
    <property type="evidence" value="ECO:0000318"/>
    <property type="project" value="GO_Central"/>
</dbReference>
<dbReference type="GO" id="GO:0005667">
    <property type="term" value="C:transcription regulator complex"/>
    <property type="evidence" value="ECO:0000353"/>
    <property type="project" value="FlyBase"/>
</dbReference>
<dbReference type="GO" id="GO:0001228">
    <property type="term" value="F:DNA-binding transcription activator activity, RNA polymerase II-specific"/>
    <property type="evidence" value="ECO:0000314"/>
    <property type="project" value="FlyBase"/>
</dbReference>
<dbReference type="GO" id="GO:0003700">
    <property type="term" value="F:DNA-binding transcription factor activity"/>
    <property type="evidence" value="ECO:0000250"/>
    <property type="project" value="FlyBase"/>
</dbReference>
<dbReference type="GO" id="GO:0000981">
    <property type="term" value="F:DNA-binding transcription factor activity, RNA polymerase II-specific"/>
    <property type="evidence" value="ECO:0000318"/>
    <property type="project" value="GO_Central"/>
</dbReference>
<dbReference type="GO" id="GO:0140297">
    <property type="term" value="F:DNA-binding transcription factor binding"/>
    <property type="evidence" value="ECO:0000316"/>
    <property type="project" value="FlyBase"/>
</dbReference>
<dbReference type="GO" id="GO:0046982">
    <property type="term" value="F:protein heterodimerization activity"/>
    <property type="evidence" value="ECO:0000353"/>
    <property type="project" value="FlyBase"/>
</dbReference>
<dbReference type="GO" id="GO:0000977">
    <property type="term" value="F:RNA polymerase II transcription regulatory region sequence-specific DNA binding"/>
    <property type="evidence" value="ECO:0000314"/>
    <property type="project" value="FlyBase"/>
</dbReference>
<dbReference type="GO" id="GO:0043565">
    <property type="term" value="F:sequence-specific DNA binding"/>
    <property type="evidence" value="ECO:0000314"/>
    <property type="project" value="FlyBase"/>
</dbReference>
<dbReference type="GO" id="GO:0007417">
    <property type="term" value="P:central nervous system development"/>
    <property type="evidence" value="ECO:0000304"/>
    <property type="project" value="FlyBase"/>
</dbReference>
<dbReference type="GO" id="GO:0022416">
    <property type="term" value="P:chaeta development"/>
    <property type="evidence" value="ECO:0000315"/>
    <property type="project" value="FlyBase"/>
</dbReference>
<dbReference type="GO" id="GO:0008407">
    <property type="term" value="P:chaeta morphogenesis"/>
    <property type="evidence" value="ECO:0000315"/>
    <property type="project" value="FlyBase"/>
</dbReference>
<dbReference type="GO" id="GO:0035883">
    <property type="term" value="P:enteroendocrine cell differentiation"/>
    <property type="evidence" value="ECO:0000315"/>
    <property type="project" value="FlyBase"/>
</dbReference>
<dbReference type="GO" id="GO:0061382">
    <property type="term" value="P:Malpighian tubule tip cell differentiation"/>
    <property type="evidence" value="ECO:0000315"/>
    <property type="project" value="FlyBase"/>
</dbReference>
<dbReference type="GO" id="GO:0043066">
    <property type="term" value="P:negative regulation of apoptotic process"/>
    <property type="evidence" value="ECO:0000315"/>
    <property type="project" value="FlyBase"/>
</dbReference>
<dbReference type="GO" id="GO:0007399">
    <property type="term" value="P:nervous system development"/>
    <property type="evidence" value="ECO:0000316"/>
    <property type="project" value="FlyBase"/>
</dbReference>
<dbReference type="GO" id="GO:0007400">
    <property type="term" value="P:neuroblast fate determination"/>
    <property type="evidence" value="ECO:0000315"/>
    <property type="project" value="FlyBase"/>
</dbReference>
<dbReference type="GO" id="GO:0030182">
    <property type="term" value="P:neuron differentiation"/>
    <property type="evidence" value="ECO:0000318"/>
    <property type="project" value="GO_Central"/>
</dbReference>
<dbReference type="GO" id="GO:0007422">
    <property type="term" value="P:peripheral nervous system development"/>
    <property type="evidence" value="ECO:0000315"/>
    <property type="project" value="FlyBase"/>
</dbReference>
<dbReference type="GO" id="GO:0045944">
    <property type="term" value="P:positive regulation of transcription by RNA polymerase II"/>
    <property type="evidence" value="ECO:0000314"/>
    <property type="project" value="FlyBase"/>
</dbReference>
<dbReference type="GO" id="GO:0006355">
    <property type="term" value="P:regulation of DNA-templated transcription"/>
    <property type="evidence" value="ECO:0000250"/>
    <property type="project" value="FlyBase"/>
</dbReference>
<dbReference type="GO" id="GO:0007346">
    <property type="term" value="P:regulation of mitotic cell cycle"/>
    <property type="evidence" value="ECO:0000304"/>
    <property type="project" value="FlyBase"/>
</dbReference>
<dbReference type="GO" id="GO:0050767">
    <property type="term" value="P:regulation of neurogenesis"/>
    <property type="evidence" value="ECO:0000318"/>
    <property type="project" value="GO_Central"/>
</dbReference>
<dbReference type="GO" id="GO:0007423">
    <property type="term" value="P:sensory organ development"/>
    <property type="evidence" value="ECO:0000315"/>
    <property type="project" value="FlyBase"/>
</dbReference>
<dbReference type="GO" id="GO:0007530">
    <property type="term" value="P:sex determination"/>
    <property type="evidence" value="ECO:0000315"/>
    <property type="project" value="FlyBase"/>
</dbReference>
<dbReference type="GO" id="GO:0007540">
    <property type="term" value="P:sex determination, establishment of X:A ratio"/>
    <property type="evidence" value="ECO:0000303"/>
    <property type="project" value="FlyBase"/>
</dbReference>
<dbReference type="GO" id="GO:0007419">
    <property type="term" value="P:ventral cord development"/>
    <property type="evidence" value="ECO:0000303"/>
    <property type="project" value="FlyBase"/>
</dbReference>
<dbReference type="CDD" id="cd19744">
    <property type="entry name" value="bHLH_TS_dAS-C_like"/>
    <property type="match status" value="1"/>
</dbReference>
<dbReference type="FunFam" id="4.10.280.10:FF:000060">
    <property type="entry name" value="Scute protein"/>
    <property type="match status" value="1"/>
</dbReference>
<dbReference type="Gene3D" id="4.10.280.10">
    <property type="entry name" value="Helix-loop-helix DNA-binding domain"/>
    <property type="match status" value="1"/>
</dbReference>
<dbReference type="InterPro" id="IPR011598">
    <property type="entry name" value="bHLH_dom"/>
</dbReference>
<dbReference type="InterPro" id="IPR036638">
    <property type="entry name" value="HLH_DNA-bd_sf"/>
</dbReference>
<dbReference type="InterPro" id="IPR015660">
    <property type="entry name" value="MASH1/Ascl1a-like"/>
</dbReference>
<dbReference type="PANTHER" id="PTHR13935:SF153">
    <property type="entry name" value="ACHAETE-SCUTE FAMILY BHLH TRANSCRIPTION FACTOR 1"/>
    <property type="match status" value="1"/>
</dbReference>
<dbReference type="PANTHER" id="PTHR13935">
    <property type="entry name" value="ACHAETE-SCUTE TRANSCRIPTION FACTOR-RELATED"/>
    <property type="match status" value="1"/>
</dbReference>
<dbReference type="Pfam" id="PF00010">
    <property type="entry name" value="HLH"/>
    <property type="match status" value="1"/>
</dbReference>
<dbReference type="SMART" id="SM00353">
    <property type="entry name" value="HLH"/>
    <property type="match status" value="1"/>
</dbReference>
<dbReference type="SUPFAM" id="SSF47459">
    <property type="entry name" value="HLH, helix-loop-helix DNA-binding domain"/>
    <property type="match status" value="1"/>
</dbReference>
<dbReference type="PROSITE" id="PS50888">
    <property type="entry name" value="BHLH"/>
    <property type="match status" value="1"/>
</dbReference>
<organism>
    <name type="scientific">Drosophila melanogaster</name>
    <name type="common">Fruit fly</name>
    <dbReference type="NCBI Taxonomy" id="7227"/>
    <lineage>
        <taxon>Eukaryota</taxon>
        <taxon>Metazoa</taxon>
        <taxon>Ecdysozoa</taxon>
        <taxon>Arthropoda</taxon>
        <taxon>Hexapoda</taxon>
        <taxon>Insecta</taxon>
        <taxon>Pterygota</taxon>
        <taxon>Neoptera</taxon>
        <taxon>Endopterygota</taxon>
        <taxon>Diptera</taxon>
        <taxon>Brachycera</taxon>
        <taxon>Muscomorpha</taxon>
        <taxon>Ephydroidea</taxon>
        <taxon>Drosophilidae</taxon>
        <taxon>Drosophila</taxon>
        <taxon>Sophophora</taxon>
    </lineage>
</organism>
<protein>
    <recommendedName>
        <fullName>Achaete-scute complex protein T4</fullName>
    </recommendedName>
    <alternativeName>
        <fullName>Protein scute</fullName>
    </alternativeName>
</protein>
<comment type="function">
    <text evidence="4 6">AS-C proteins are involved in the determination of the neuronal precursors in the peripheral nervous system and the central nervous system. Also involved in sex determination and dosage compensation.</text>
</comment>
<comment type="subunit">
    <text evidence="3 5">Efficient DNA binding requires dimerization with another bHLH protein. Interacts with da (via bHLH motif). Interacts with Bap60.</text>
</comment>
<comment type="interaction">
    <interactant intactId="EBI-174136">
        <id>P10084</id>
    </interactant>
    <interactant intactId="EBI-367267">
        <id>Q86PA6</id>
        <label>da</label>
    </interactant>
    <organismsDiffer>false</organismsDiffer>
    <experiments>5</experiments>
</comment>
<comment type="interaction">
    <interactant intactId="EBI-174136">
        <id>P10084</id>
    </interactant>
    <interactant intactId="EBI-105737">
        <id>P18491</id>
        <label>emc</label>
    </interactant>
    <organismsDiffer>false</organismsDiffer>
    <experiments>4</experiments>
</comment>
<comment type="tissue specificity">
    <text evidence="6">L(1)SC, SC and AC strongly label the presumptive stomatogastric nervous system, while ASE is more prominent in the presumptive procephalic lobe. Associates with the somatic nuclei through nuclear cycles 9 and 10. During nuclear cycle 11 distributes uniformly in the embryo.</text>
</comment>
<comment type="developmental stage">
    <text evidence="6">Expressed zygotically in embryos from 0 to 12 hours after fertilization, with a peak of expression during the 2 to 4 hour period. Expression reappears in third instar larvae and pupae.</text>
</comment>